<name>SAS6_CHICK</name>
<dbReference type="EMBL" id="AJ719282">
    <property type="protein sequence ID" value="CAG30941.1"/>
    <property type="molecule type" value="mRNA"/>
</dbReference>
<dbReference type="RefSeq" id="NP_001026444.1">
    <property type="nucleotide sequence ID" value="NM_001031273.1"/>
</dbReference>
<dbReference type="SMR" id="Q5ZMV2"/>
<dbReference type="FunCoup" id="Q5ZMV2">
    <property type="interactions" value="875"/>
</dbReference>
<dbReference type="STRING" id="9031.ENSGALP00000008489"/>
<dbReference type="GeneID" id="424471"/>
<dbReference type="KEGG" id="gga:424471"/>
<dbReference type="CTD" id="163786"/>
<dbReference type="VEuPathDB" id="HostDB:geneid_424471"/>
<dbReference type="eggNOG" id="ENOG502QQ4W">
    <property type="taxonomic scope" value="Eukaryota"/>
</dbReference>
<dbReference type="InParanoid" id="Q5ZMV2"/>
<dbReference type="OrthoDB" id="49058at2759"/>
<dbReference type="PhylomeDB" id="Q5ZMV2"/>
<dbReference type="PRO" id="PR:Q5ZMV2"/>
<dbReference type="Proteomes" id="UP000000539">
    <property type="component" value="Unassembled WGS sequence"/>
</dbReference>
<dbReference type="GO" id="GO:0005814">
    <property type="term" value="C:centriole"/>
    <property type="evidence" value="ECO:0000250"/>
    <property type="project" value="UniProtKB"/>
</dbReference>
<dbReference type="GO" id="GO:0005813">
    <property type="term" value="C:centrosome"/>
    <property type="evidence" value="ECO:0000318"/>
    <property type="project" value="GO_Central"/>
</dbReference>
<dbReference type="GO" id="GO:0005737">
    <property type="term" value="C:cytoplasm"/>
    <property type="evidence" value="ECO:0007669"/>
    <property type="project" value="UniProtKB-KW"/>
</dbReference>
<dbReference type="GO" id="GO:0098536">
    <property type="term" value="C:deuterosome"/>
    <property type="evidence" value="ECO:0000250"/>
    <property type="project" value="UniProtKB"/>
</dbReference>
<dbReference type="GO" id="GO:0007099">
    <property type="term" value="P:centriole replication"/>
    <property type="evidence" value="ECO:0000250"/>
    <property type="project" value="UniProtKB"/>
</dbReference>
<dbReference type="GO" id="GO:0007283">
    <property type="term" value="P:spermatogenesis"/>
    <property type="evidence" value="ECO:0000318"/>
    <property type="project" value="GO_Central"/>
</dbReference>
<dbReference type="CDD" id="cd10142">
    <property type="entry name" value="HD_SAS6_N"/>
    <property type="match status" value="1"/>
</dbReference>
<dbReference type="FunFam" id="2.170.210.20:FF:000001">
    <property type="entry name" value="Spindle assembly abnormal protein 6 homolog"/>
    <property type="match status" value="1"/>
</dbReference>
<dbReference type="Gene3D" id="1.10.287.1490">
    <property type="match status" value="1"/>
</dbReference>
<dbReference type="Gene3D" id="2.170.210.20">
    <property type="entry name" value="Spindle assembly abnormal protein 6, N-terminal domain"/>
    <property type="match status" value="1"/>
</dbReference>
<dbReference type="InterPro" id="IPR032396">
    <property type="entry name" value="SAS-6_N"/>
</dbReference>
<dbReference type="InterPro" id="IPR038558">
    <property type="entry name" value="SAS-6_N_sf"/>
</dbReference>
<dbReference type="InterPro" id="IPR041513">
    <property type="entry name" value="SAS6_CC"/>
</dbReference>
<dbReference type="PANTHER" id="PTHR44281">
    <property type="entry name" value="SPINDLE ASSEMBLY ABNORMAL PROTEIN 6 HOMOLOG"/>
    <property type="match status" value="1"/>
</dbReference>
<dbReference type="PANTHER" id="PTHR44281:SF4">
    <property type="entry name" value="SPINDLE ASSEMBLY ABNORMAL PROTEIN 6 HOMOLOG"/>
    <property type="match status" value="1"/>
</dbReference>
<dbReference type="Pfam" id="PF16531">
    <property type="entry name" value="SAS-6_N"/>
    <property type="match status" value="1"/>
</dbReference>
<dbReference type="Pfam" id="PF18594">
    <property type="entry name" value="Sas6_CC"/>
    <property type="match status" value="1"/>
</dbReference>
<proteinExistence type="evidence at transcript level"/>
<gene>
    <name type="primary">SASS6</name>
    <name type="synonym">SAS6</name>
    <name type="ORF">RCJMB04_1b15</name>
</gene>
<accession>Q5ZMV2</accession>
<reference key="1">
    <citation type="journal article" date="2005" name="Genome Biol.">
        <title>Full-length cDNAs from chicken bursal lymphocytes to facilitate gene function analysis.</title>
        <authorList>
            <person name="Caldwell R.B."/>
            <person name="Kierzek A.M."/>
            <person name="Arakawa H."/>
            <person name="Bezzubov Y."/>
            <person name="Zaim J."/>
            <person name="Fiedler P."/>
            <person name="Kutter S."/>
            <person name="Blagodatski A."/>
            <person name="Kostovska D."/>
            <person name="Koter M."/>
            <person name="Plachy J."/>
            <person name="Carninci P."/>
            <person name="Hayashizaki Y."/>
            <person name="Buerstedde J.-M."/>
        </authorList>
    </citation>
    <scope>NUCLEOTIDE SEQUENCE [LARGE SCALE MRNA]</scope>
    <source>
        <strain>CB</strain>
        <tissue>Bursa of Fabricius</tissue>
    </source>
</reference>
<evidence type="ECO:0000250" key="1"/>
<evidence type="ECO:0000250" key="2">
    <source>
        <dbReference type="UniProtKB" id="Q6NRG6"/>
    </source>
</evidence>
<evidence type="ECO:0000250" key="3">
    <source>
        <dbReference type="UniProtKB" id="Q6UVJ0"/>
    </source>
</evidence>
<evidence type="ECO:0000250" key="4">
    <source>
        <dbReference type="UniProtKB" id="Q7ZVT3"/>
    </source>
</evidence>
<evidence type="ECO:0000255" key="5"/>
<organism>
    <name type="scientific">Gallus gallus</name>
    <name type="common">Chicken</name>
    <dbReference type="NCBI Taxonomy" id="9031"/>
    <lineage>
        <taxon>Eukaryota</taxon>
        <taxon>Metazoa</taxon>
        <taxon>Chordata</taxon>
        <taxon>Craniata</taxon>
        <taxon>Vertebrata</taxon>
        <taxon>Euteleostomi</taxon>
        <taxon>Archelosauria</taxon>
        <taxon>Archosauria</taxon>
        <taxon>Dinosauria</taxon>
        <taxon>Saurischia</taxon>
        <taxon>Theropoda</taxon>
        <taxon>Coelurosauria</taxon>
        <taxon>Aves</taxon>
        <taxon>Neognathae</taxon>
        <taxon>Galloanserae</taxon>
        <taxon>Galliformes</taxon>
        <taxon>Phasianidae</taxon>
        <taxon>Phasianinae</taxon>
        <taxon>Gallus</taxon>
    </lineage>
</organism>
<protein>
    <recommendedName>
        <fullName>Spindle assembly abnormal protein 6 homolog</fullName>
    </recommendedName>
</protein>
<comment type="function">
    <text evidence="3 4">Central scaffolding component of the centrioles ensuring their 9-fold symmetry. Required for centrosome biogenesis and duplication: required both for mother-centriole-dependent centriole duplication and deuterosome-dependent centriole amplification in multiciliated cells (By similarity).</text>
</comment>
<comment type="subunit">
    <text evidence="4">Nine homodimers form a cartwheel structure with an internal diameter of 23 nM and radial spokes connecting to the microtubule triplets.</text>
</comment>
<comment type="subcellular location">
    <subcellularLocation>
        <location evidence="4">Cytoplasm</location>
        <location evidence="4">Cytoskeleton</location>
        <location evidence="4">Microtubule organizing center</location>
        <location evidence="4">Centrosome</location>
    </subcellularLocation>
    <text evidence="2">Component of the deuterosome, a structure that promotes de novo centriole amplification in multiciliated cells that can generate more than 100 centrioles (By similarity).</text>
</comment>
<comment type="domain">
    <text evidence="1">The 35 nM long coiled-coil domain mediates homodimerization while the globular N-terminus links the dimers at an angle of 40 degrees to form the inner ring.</text>
</comment>
<sequence length="640" mass="73621">MAAELLFNCEVCVQVRSQACEERRLNVRVNVELLSISNPVHKKDLAVRLTDDADPFFLYNLVISEEDFQSLKSQQGLLVDFSAFPQKFIDLLQQCIQEQNKDIPRFLLQLVYSGSVLDHTPVSLNVVETNPFKHLTHLSLKFLPGNDAEIKKFLARCLKCLKEDKMTLEDKLRKTEEDFTRQLSYTQQSLSEKSRELDKLKNEWTSYTAALTSKHTQELTAEKERALQAQTQYQQQHEQQKKELESLHQRSIQQLQNRLSELEVINKDLTERRYKGDSTVRELKAKLSGVEDECQRAKQEVVSLRRENTTLDAECHEKEKFINQLQTRVAVLEQEIKDKDQLVIRTKEVLDATQEQKVILEENTEKKQSHIEKLETTIKSLSAELLKANEIIKKLQEDLKTLMSKLKLKNTVTIQQEKLLAEKEERLQKEQRELQETGQSLRMKEQEVCKLQEQLETTIQKLEESKQLLKTNENVITWLNKQLNEVQMLKRMETPSSMHGGIRTALSPHGMLERPSFPSSGISHTISPFYAFQKFAEPAHNKNPSPHCPVPKIQFNSQVSKIDQHSDVQVVTAATGHPANKENGDNLGLESKYFKKKEDSIPLRGLSQNTLNSENLKPYLPKVQPSLPAAVTTTSAYFPG</sequence>
<feature type="chain" id="PRO_0000189974" description="Spindle assembly abnormal protein 6 homolog">
    <location>
        <begin position="1"/>
        <end position="640"/>
    </location>
</feature>
<feature type="domain" description="PISA">
    <location>
        <begin position="40"/>
        <end position="92"/>
    </location>
</feature>
<feature type="coiled-coil region" evidence="5">
    <location>
        <begin position="154"/>
        <end position="475"/>
    </location>
</feature>
<keyword id="KW-0131">Cell cycle</keyword>
<keyword id="KW-0175">Coiled coil</keyword>
<keyword id="KW-0963">Cytoplasm</keyword>
<keyword id="KW-0206">Cytoskeleton</keyword>
<keyword id="KW-1185">Reference proteome</keyword>